<organism>
    <name type="scientific">Vibrio atlanticus (strain LGP32)</name>
    <name type="common">Vibrio splendidus (strain Mel32)</name>
    <dbReference type="NCBI Taxonomy" id="575788"/>
    <lineage>
        <taxon>Bacteria</taxon>
        <taxon>Pseudomonadati</taxon>
        <taxon>Pseudomonadota</taxon>
        <taxon>Gammaproteobacteria</taxon>
        <taxon>Vibrionales</taxon>
        <taxon>Vibrionaceae</taxon>
        <taxon>Vibrio</taxon>
    </lineage>
</organism>
<reference key="1">
    <citation type="submission" date="2009-02" db="EMBL/GenBank/DDBJ databases">
        <title>Vibrio splendidus str. LGP32 complete genome.</title>
        <authorList>
            <person name="Mazel D."/>
            <person name="Le Roux F."/>
        </authorList>
    </citation>
    <scope>NUCLEOTIDE SEQUENCE [LARGE SCALE GENOMIC DNA]</scope>
    <source>
        <strain>LGP32</strain>
    </source>
</reference>
<evidence type="ECO:0000255" key="1">
    <source>
        <dbReference type="HAMAP-Rule" id="MF_00823"/>
    </source>
</evidence>
<evidence type="ECO:0000255" key="2">
    <source>
        <dbReference type="PROSITE-ProRule" id="PRU01137"/>
    </source>
</evidence>
<name>ACCA_VIBA3</name>
<keyword id="KW-0067">ATP-binding</keyword>
<keyword id="KW-0963">Cytoplasm</keyword>
<keyword id="KW-0275">Fatty acid biosynthesis</keyword>
<keyword id="KW-0276">Fatty acid metabolism</keyword>
<keyword id="KW-0444">Lipid biosynthesis</keyword>
<keyword id="KW-0443">Lipid metabolism</keyword>
<keyword id="KW-0547">Nucleotide-binding</keyword>
<keyword id="KW-0808">Transferase</keyword>
<gene>
    <name evidence="1" type="primary">accA</name>
    <name type="ordered locus">VS_2336</name>
</gene>
<accession>B7VIQ2</accession>
<dbReference type="EC" id="2.1.3.15" evidence="1"/>
<dbReference type="EMBL" id="FM954972">
    <property type="protein sequence ID" value="CAV19498.1"/>
    <property type="molecule type" value="Genomic_DNA"/>
</dbReference>
<dbReference type="SMR" id="B7VIQ2"/>
<dbReference type="STRING" id="575788.VS_2336"/>
<dbReference type="KEGG" id="vsp:VS_2336"/>
<dbReference type="eggNOG" id="COG0825">
    <property type="taxonomic scope" value="Bacteria"/>
</dbReference>
<dbReference type="HOGENOM" id="CLU_015486_0_2_6"/>
<dbReference type="UniPathway" id="UPA00655">
    <property type="reaction ID" value="UER00711"/>
</dbReference>
<dbReference type="Proteomes" id="UP000009100">
    <property type="component" value="Chromosome 1"/>
</dbReference>
<dbReference type="GO" id="GO:0009317">
    <property type="term" value="C:acetyl-CoA carboxylase complex"/>
    <property type="evidence" value="ECO:0007669"/>
    <property type="project" value="InterPro"/>
</dbReference>
<dbReference type="GO" id="GO:0003989">
    <property type="term" value="F:acetyl-CoA carboxylase activity"/>
    <property type="evidence" value="ECO:0007669"/>
    <property type="project" value="InterPro"/>
</dbReference>
<dbReference type="GO" id="GO:0005524">
    <property type="term" value="F:ATP binding"/>
    <property type="evidence" value="ECO:0007669"/>
    <property type="project" value="UniProtKB-KW"/>
</dbReference>
<dbReference type="GO" id="GO:0016743">
    <property type="term" value="F:carboxyl- or carbamoyltransferase activity"/>
    <property type="evidence" value="ECO:0007669"/>
    <property type="project" value="UniProtKB-UniRule"/>
</dbReference>
<dbReference type="GO" id="GO:0006633">
    <property type="term" value="P:fatty acid biosynthetic process"/>
    <property type="evidence" value="ECO:0007669"/>
    <property type="project" value="UniProtKB-KW"/>
</dbReference>
<dbReference type="GO" id="GO:2001295">
    <property type="term" value="P:malonyl-CoA biosynthetic process"/>
    <property type="evidence" value="ECO:0007669"/>
    <property type="project" value="UniProtKB-UniRule"/>
</dbReference>
<dbReference type="FunFam" id="3.90.226.10:FF:000008">
    <property type="entry name" value="Acetyl-coenzyme A carboxylase carboxyl transferase subunit alpha"/>
    <property type="match status" value="1"/>
</dbReference>
<dbReference type="Gene3D" id="3.90.226.10">
    <property type="entry name" value="2-enoyl-CoA Hydratase, Chain A, domain 1"/>
    <property type="match status" value="1"/>
</dbReference>
<dbReference type="HAMAP" id="MF_00823">
    <property type="entry name" value="AcetylCoA_CT_alpha"/>
    <property type="match status" value="1"/>
</dbReference>
<dbReference type="InterPro" id="IPR001095">
    <property type="entry name" value="Acetyl_CoA_COase_a_su"/>
</dbReference>
<dbReference type="InterPro" id="IPR029045">
    <property type="entry name" value="ClpP/crotonase-like_dom_sf"/>
</dbReference>
<dbReference type="InterPro" id="IPR011763">
    <property type="entry name" value="COA_CT_C"/>
</dbReference>
<dbReference type="NCBIfam" id="TIGR00513">
    <property type="entry name" value="accA"/>
    <property type="match status" value="1"/>
</dbReference>
<dbReference type="NCBIfam" id="NF041504">
    <property type="entry name" value="AccA_sub"/>
    <property type="match status" value="1"/>
</dbReference>
<dbReference type="NCBIfam" id="NF004344">
    <property type="entry name" value="PRK05724.1"/>
    <property type="match status" value="1"/>
</dbReference>
<dbReference type="PANTHER" id="PTHR42853">
    <property type="entry name" value="ACETYL-COENZYME A CARBOXYLASE CARBOXYL TRANSFERASE SUBUNIT ALPHA"/>
    <property type="match status" value="1"/>
</dbReference>
<dbReference type="PANTHER" id="PTHR42853:SF3">
    <property type="entry name" value="ACETYL-COENZYME A CARBOXYLASE CARBOXYL TRANSFERASE SUBUNIT ALPHA, CHLOROPLASTIC"/>
    <property type="match status" value="1"/>
</dbReference>
<dbReference type="Pfam" id="PF03255">
    <property type="entry name" value="ACCA"/>
    <property type="match status" value="1"/>
</dbReference>
<dbReference type="PRINTS" id="PR01069">
    <property type="entry name" value="ACCCTRFRASEA"/>
</dbReference>
<dbReference type="SUPFAM" id="SSF52096">
    <property type="entry name" value="ClpP/crotonase"/>
    <property type="match status" value="1"/>
</dbReference>
<dbReference type="PROSITE" id="PS50989">
    <property type="entry name" value="COA_CT_CTER"/>
    <property type="match status" value="1"/>
</dbReference>
<comment type="function">
    <text evidence="1">Component of the acetyl coenzyme A carboxylase (ACC) complex. First, biotin carboxylase catalyzes the carboxylation of biotin on its carrier protein (BCCP) and then the CO(2) group is transferred by the carboxyltransferase to acetyl-CoA to form malonyl-CoA.</text>
</comment>
<comment type="catalytic activity">
    <reaction evidence="1">
        <text>N(6)-carboxybiotinyl-L-lysyl-[protein] + acetyl-CoA = N(6)-biotinyl-L-lysyl-[protein] + malonyl-CoA</text>
        <dbReference type="Rhea" id="RHEA:54728"/>
        <dbReference type="Rhea" id="RHEA-COMP:10505"/>
        <dbReference type="Rhea" id="RHEA-COMP:10506"/>
        <dbReference type="ChEBI" id="CHEBI:57288"/>
        <dbReference type="ChEBI" id="CHEBI:57384"/>
        <dbReference type="ChEBI" id="CHEBI:83144"/>
        <dbReference type="ChEBI" id="CHEBI:83145"/>
        <dbReference type="EC" id="2.1.3.15"/>
    </reaction>
</comment>
<comment type="pathway">
    <text evidence="1">Lipid metabolism; malonyl-CoA biosynthesis; malonyl-CoA from acetyl-CoA: step 1/1.</text>
</comment>
<comment type="subunit">
    <text evidence="1">Acetyl-CoA carboxylase is a heterohexamer composed of biotin carboxyl carrier protein (AccB), biotin carboxylase (AccC) and two subunits each of ACCase subunit alpha (AccA) and ACCase subunit beta (AccD).</text>
</comment>
<comment type="subcellular location">
    <subcellularLocation>
        <location evidence="1">Cytoplasm</location>
    </subcellularLocation>
</comment>
<comment type="similarity">
    <text evidence="1">Belongs to the AccA family.</text>
</comment>
<proteinExistence type="inferred from homology"/>
<protein>
    <recommendedName>
        <fullName evidence="1">Acetyl-coenzyme A carboxylase carboxyl transferase subunit alpha</fullName>
        <shortName evidence="1">ACCase subunit alpha</shortName>
        <shortName evidence="1">Acetyl-CoA carboxylase carboxyltransferase subunit alpha</shortName>
        <ecNumber evidence="1">2.1.3.15</ecNumber>
    </recommendedName>
</protein>
<sequence>MSLNFLEFEKPIAELEAKIEALRDVSRHGGDTAVDLDKEIEQLEKKSLELKQKIFSDLGAWQVAQLARHPQRPYTKDYLEHAFTEFEEMAGDRAYADDKAIVGGMARLNGRPVMVIGHQKGRETKEKVIRNFGMPKPEGYRKALRLMETAERFNMPIITFIDTAGAYPGVGAEERGQSEAIAKNLKVMAGLSVPVICNVVGEGGSGGALAIGVGDYVNMLQYSTYSVISPEGCASILWRDSDKAPQAAEAMGLVAPRLKELELIDEIIPEPLGGAHRDPIQTAQNMKDMLVKQLEELEQFDNEALLERRYQRLMSYGYC</sequence>
<feature type="chain" id="PRO_1000148760" description="Acetyl-coenzyme A carboxylase carboxyl transferase subunit alpha">
    <location>
        <begin position="1"/>
        <end position="319"/>
    </location>
</feature>
<feature type="domain" description="CoA carboxyltransferase C-terminal" evidence="2">
    <location>
        <begin position="35"/>
        <end position="296"/>
    </location>
</feature>